<accession>Q3AI95</accession>
<reference key="1">
    <citation type="submission" date="2005-07" db="EMBL/GenBank/DDBJ databases">
        <title>Complete sequence of Synechococcus sp. CC9605.</title>
        <authorList>
            <consortium name="US DOE Joint Genome Institute"/>
            <person name="Copeland A."/>
            <person name="Lucas S."/>
            <person name="Lapidus A."/>
            <person name="Barry K."/>
            <person name="Detter J.C."/>
            <person name="Glavina T."/>
            <person name="Hammon N."/>
            <person name="Israni S."/>
            <person name="Pitluck S."/>
            <person name="Schmutz J."/>
            <person name="Martinez M."/>
            <person name="Larimer F."/>
            <person name="Land M."/>
            <person name="Kyrpides N."/>
            <person name="Ivanova N."/>
            <person name="Richardson P."/>
        </authorList>
    </citation>
    <scope>NUCLEOTIDE SEQUENCE [LARGE SCALE GENOMIC DNA]</scope>
    <source>
        <strain>CC9605</strain>
    </source>
</reference>
<feature type="chain" id="PRO_1000114797" description="Imidazole glycerol phosphate synthase subunit HisH">
    <location>
        <begin position="1"/>
        <end position="213"/>
    </location>
</feature>
<feature type="domain" description="Glutamine amidotransferase type-1" evidence="1">
    <location>
        <begin position="4"/>
        <end position="211"/>
    </location>
</feature>
<feature type="active site" description="Nucleophile" evidence="1">
    <location>
        <position position="82"/>
    </location>
</feature>
<feature type="active site" evidence="1">
    <location>
        <position position="186"/>
    </location>
</feature>
<feature type="active site" evidence="1">
    <location>
        <position position="188"/>
    </location>
</feature>
<protein>
    <recommendedName>
        <fullName evidence="1">Imidazole glycerol phosphate synthase subunit HisH</fullName>
        <ecNumber evidence="1">4.3.2.10</ecNumber>
    </recommendedName>
    <alternativeName>
        <fullName evidence="1">IGP synthase glutaminase subunit</fullName>
        <ecNumber evidence="1">3.5.1.2</ecNumber>
    </alternativeName>
    <alternativeName>
        <fullName evidence="1">IGP synthase subunit HisH</fullName>
    </alternativeName>
    <alternativeName>
        <fullName evidence="1">ImGP synthase subunit HisH</fullName>
        <shortName evidence="1">IGPS subunit HisH</shortName>
    </alternativeName>
</protein>
<comment type="function">
    <text evidence="1">IGPS catalyzes the conversion of PRFAR and glutamine to IGP, AICAR and glutamate. The HisH subunit catalyzes the hydrolysis of glutamine to glutamate and ammonia as part of the synthesis of IGP and AICAR. The resulting ammonia molecule is channeled to the active site of HisF.</text>
</comment>
<comment type="catalytic activity">
    <reaction evidence="1">
        <text>5-[(5-phospho-1-deoxy-D-ribulos-1-ylimino)methylamino]-1-(5-phospho-beta-D-ribosyl)imidazole-4-carboxamide + L-glutamine = D-erythro-1-(imidazol-4-yl)glycerol 3-phosphate + 5-amino-1-(5-phospho-beta-D-ribosyl)imidazole-4-carboxamide + L-glutamate + H(+)</text>
        <dbReference type="Rhea" id="RHEA:24793"/>
        <dbReference type="ChEBI" id="CHEBI:15378"/>
        <dbReference type="ChEBI" id="CHEBI:29985"/>
        <dbReference type="ChEBI" id="CHEBI:58278"/>
        <dbReference type="ChEBI" id="CHEBI:58359"/>
        <dbReference type="ChEBI" id="CHEBI:58475"/>
        <dbReference type="ChEBI" id="CHEBI:58525"/>
        <dbReference type="EC" id="4.3.2.10"/>
    </reaction>
</comment>
<comment type="catalytic activity">
    <reaction evidence="1">
        <text>L-glutamine + H2O = L-glutamate + NH4(+)</text>
        <dbReference type="Rhea" id="RHEA:15889"/>
        <dbReference type="ChEBI" id="CHEBI:15377"/>
        <dbReference type="ChEBI" id="CHEBI:28938"/>
        <dbReference type="ChEBI" id="CHEBI:29985"/>
        <dbReference type="ChEBI" id="CHEBI:58359"/>
        <dbReference type="EC" id="3.5.1.2"/>
    </reaction>
</comment>
<comment type="pathway">
    <text evidence="1">Amino-acid biosynthesis; L-histidine biosynthesis; L-histidine from 5-phospho-alpha-D-ribose 1-diphosphate: step 5/9.</text>
</comment>
<comment type="subunit">
    <text evidence="1">Heterodimer of HisH and HisF.</text>
</comment>
<comment type="subcellular location">
    <subcellularLocation>
        <location evidence="1">Cytoplasm</location>
    </subcellularLocation>
</comment>
<organism>
    <name type="scientific">Synechococcus sp. (strain CC9605)</name>
    <dbReference type="NCBI Taxonomy" id="110662"/>
    <lineage>
        <taxon>Bacteria</taxon>
        <taxon>Bacillati</taxon>
        <taxon>Cyanobacteriota</taxon>
        <taxon>Cyanophyceae</taxon>
        <taxon>Synechococcales</taxon>
        <taxon>Synechococcaceae</taxon>
        <taxon>Synechococcus</taxon>
    </lineage>
</organism>
<proteinExistence type="inferred from homology"/>
<sequence length="213" mass="23167">MSLNLGLIDYGMGNLHSVEKCLERLDQGCSLINNSDDLEGIDALILPGVGAFDPAMANLRATGLVPHLLRWGQEDRPLLGICLGLQLLFEQSDEGSDPGLGLLGGRVTRLPSKSGERIPHMGWAPLKHHGTCPLLSSDASSEWVYFVHSYAAVPTDRNDLKASAPFGDQEVTAVVWRGRVGACQFHPEKSSDAGEQMLKRWLTWLRNGAEPCP</sequence>
<name>HIS5_SYNSC</name>
<keyword id="KW-0028">Amino-acid biosynthesis</keyword>
<keyword id="KW-0963">Cytoplasm</keyword>
<keyword id="KW-0315">Glutamine amidotransferase</keyword>
<keyword id="KW-0368">Histidine biosynthesis</keyword>
<keyword id="KW-0378">Hydrolase</keyword>
<keyword id="KW-0456">Lyase</keyword>
<gene>
    <name evidence="1" type="primary">hisH</name>
    <name type="ordered locus">Syncc9605_1946</name>
</gene>
<evidence type="ECO:0000255" key="1">
    <source>
        <dbReference type="HAMAP-Rule" id="MF_00278"/>
    </source>
</evidence>
<dbReference type="EC" id="4.3.2.10" evidence="1"/>
<dbReference type="EC" id="3.5.1.2" evidence="1"/>
<dbReference type="EMBL" id="CP000110">
    <property type="protein sequence ID" value="ABB35687.1"/>
    <property type="molecule type" value="Genomic_DNA"/>
</dbReference>
<dbReference type="RefSeq" id="WP_011364896.1">
    <property type="nucleotide sequence ID" value="NC_007516.1"/>
</dbReference>
<dbReference type="SMR" id="Q3AI95"/>
<dbReference type="STRING" id="110662.Syncc9605_1946"/>
<dbReference type="KEGG" id="syd:Syncc9605_1946"/>
<dbReference type="eggNOG" id="COG0118">
    <property type="taxonomic scope" value="Bacteria"/>
</dbReference>
<dbReference type="HOGENOM" id="CLU_071837_2_2_3"/>
<dbReference type="OrthoDB" id="9807137at2"/>
<dbReference type="UniPathway" id="UPA00031">
    <property type="reaction ID" value="UER00010"/>
</dbReference>
<dbReference type="GO" id="GO:0005737">
    <property type="term" value="C:cytoplasm"/>
    <property type="evidence" value="ECO:0007669"/>
    <property type="project" value="UniProtKB-SubCell"/>
</dbReference>
<dbReference type="GO" id="GO:0004359">
    <property type="term" value="F:glutaminase activity"/>
    <property type="evidence" value="ECO:0007669"/>
    <property type="project" value="UniProtKB-EC"/>
</dbReference>
<dbReference type="GO" id="GO:0000107">
    <property type="term" value="F:imidazoleglycerol-phosphate synthase activity"/>
    <property type="evidence" value="ECO:0007669"/>
    <property type="project" value="UniProtKB-UniRule"/>
</dbReference>
<dbReference type="GO" id="GO:0016829">
    <property type="term" value="F:lyase activity"/>
    <property type="evidence" value="ECO:0007669"/>
    <property type="project" value="UniProtKB-KW"/>
</dbReference>
<dbReference type="GO" id="GO:0000105">
    <property type="term" value="P:L-histidine biosynthetic process"/>
    <property type="evidence" value="ECO:0007669"/>
    <property type="project" value="UniProtKB-UniRule"/>
</dbReference>
<dbReference type="CDD" id="cd01748">
    <property type="entry name" value="GATase1_IGP_Synthase"/>
    <property type="match status" value="1"/>
</dbReference>
<dbReference type="Gene3D" id="3.40.50.880">
    <property type="match status" value="1"/>
</dbReference>
<dbReference type="HAMAP" id="MF_00278">
    <property type="entry name" value="HisH"/>
    <property type="match status" value="1"/>
</dbReference>
<dbReference type="InterPro" id="IPR029062">
    <property type="entry name" value="Class_I_gatase-like"/>
</dbReference>
<dbReference type="InterPro" id="IPR017926">
    <property type="entry name" value="GATASE"/>
</dbReference>
<dbReference type="InterPro" id="IPR010139">
    <property type="entry name" value="Imidazole-glycPsynth_HisH"/>
</dbReference>
<dbReference type="NCBIfam" id="TIGR01855">
    <property type="entry name" value="IMP_synth_hisH"/>
    <property type="match status" value="1"/>
</dbReference>
<dbReference type="PANTHER" id="PTHR42701">
    <property type="entry name" value="IMIDAZOLE GLYCEROL PHOSPHATE SYNTHASE SUBUNIT HISH"/>
    <property type="match status" value="1"/>
</dbReference>
<dbReference type="PANTHER" id="PTHR42701:SF1">
    <property type="entry name" value="IMIDAZOLE GLYCEROL PHOSPHATE SYNTHASE SUBUNIT HISH"/>
    <property type="match status" value="1"/>
</dbReference>
<dbReference type="Pfam" id="PF00117">
    <property type="entry name" value="GATase"/>
    <property type="match status" value="1"/>
</dbReference>
<dbReference type="PIRSF" id="PIRSF000495">
    <property type="entry name" value="Amidotransf_hisH"/>
    <property type="match status" value="1"/>
</dbReference>
<dbReference type="SUPFAM" id="SSF52317">
    <property type="entry name" value="Class I glutamine amidotransferase-like"/>
    <property type="match status" value="1"/>
</dbReference>
<dbReference type="PROSITE" id="PS51273">
    <property type="entry name" value="GATASE_TYPE_1"/>
    <property type="match status" value="1"/>
</dbReference>